<sequence length="788" mass="88779">MGSADSKLNFRKAVIQLTTKTQPVEATDNAFWDQFWADTATSVQDVFALVPAAEIRAVREESPSNLATLCYKAVEKLVQGAEGGCHSEKEKQVVLNCSRLLTRVLPYIFEDPDWRGFFWSTVPGAGRGGQGEEEDENARPLAESLLLAIADLLFCPDFTVQNHRRNDVDSAEDVHSLDSCEYIWEAGVGFAHSPQPNYIHDMNRMELLKLLLTCFSEAMYLPPSPESGSTNPWVQFFCSTENRHALPLFTSLLNTVCAYDPVGYGIPYNHLLFSDYREPLVEEAAQVLIVTLDHDSATSTSPTVDGTTTGTAMDDADPPGPENLFVNYLSRIHREEDFQFILKGIARLLSNPLLQTYLPNSTKKIQFHQELLVLFWKLCDFNKKFLFFVLKSSDVLDILVPILYFLNDARADQSRVGLMHIGVFILLLLSGERNFGVRLNKPYSVRVPMDIPVFTGTHADLLIVVFHKIITSGHQRLQPLFDCLLTIVVNVSPYLKSLSMVTANKLLHLLEAFSTTWFLFSASQNHHLVFFLLEVFNNIIQYQFDGNSNLVYAIIRKRAVFHQLANLPTDPPSIHKALQRRRRTPEPLSRTGSQEGTSMEGSRPAAPAEPGTLKTSLVATPGIDKLTEKSQVSEDGTLRSLEPESQQSSAENSPSDGESSQTWREQRRLSNASASGQWSPTSDWILSWKSKLPLQTIMRLLQVLVPQVEKICIDKGLTDESEILRFLQHGTLVGLLPVPHPILIRKYQANSGTAMWFRTYMWGVIYLRNVDPPIWYDTDVKLFEIQRV</sequence>
<proteinExistence type="evidence at protein level"/>
<reference key="1">
    <citation type="submission" date="2002-07" db="EMBL/GenBank/DDBJ databases">
        <title>Mutations in a new protein containing ankyrin repeats and SAM domain cause deafness in Jackson shaker mice, a model for Usher syndrome type IG.</title>
        <authorList>
            <person name="Kikkawa Y."/>
            <person name="Shitara H."/>
            <person name="Kohara Y."/>
            <person name="Takada T."/>
            <person name="Okamoto M."/>
            <person name="Taya C."/>
            <person name="Wakana S."/>
            <person name="Kamiya K."/>
            <person name="Yoshikawa Y."/>
            <person name="Tokano H."/>
            <person name="Kitamura K."/>
            <person name="Shimizu K."/>
            <person name="Shiroishi T."/>
            <person name="Wakabayashi Y."/>
            <person name="Kominami R."/>
            <person name="Yonekawa H."/>
        </authorList>
    </citation>
    <scope>NUCLEOTIDE SEQUENCE [MRNA] (ISOFORM 1)</scope>
    <source>
        <strain>C57BL/6J</strain>
        <tissue>Brain</tissue>
    </source>
</reference>
<reference key="2">
    <citation type="journal article" date="2005" name="Science">
        <title>The transcriptional landscape of the mammalian genome.</title>
        <authorList>
            <person name="Carninci P."/>
            <person name="Kasukawa T."/>
            <person name="Katayama S."/>
            <person name="Gough J."/>
            <person name="Frith M.C."/>
            <person name="Maeda N."/>
            <person name="Oyama R."/>
            <person name="Ravasi T."/>
            <person name="Lenhard B."/>
            <person name="Wells C."/>
            <person name="Kodzius R."/>
            <person name="Shimokawa K."/>
            <person name="Bajic V.B."/>
            <person name="Brenner S.E."/>
            <person name="Batalov S."/>
            <person name="Forrest A.R."/>
            <person name="Zavolan M."/>
            <person name="Davis M.J."/>
            <person name="Wilming L.G."/>
            <person name="Aidinis V."/>
            <person name="Allen J.E."/>
            <person name="Ambesi-Impiombato A."/>
            <person name="Apweiler R."/>
            <person name="Aturaliya R.N."/>
            <person name="Bailey T.L."/>
            <person name="Bansal M."/>
            <person name="Baxter L."/>
            <person name="Beisel K.W."/>
            <person name="Bersano T."/>
            <person name="Bono H."/>
            <person name="Chalk A.M."/>
            <person name="Chiu K.P."/>
            <person name="Choudhary V."/>
            <person name="Christoffels A."/>
            <person name="Clutterbuck D.R."/>
            <person name="Crowe M.L."/>
            <person name="Dalla E."/>
            <person name="Dalrymple B.P."/>
            <person name="de Bono B."/>
            <person name="Della Gatta G."/>
            <person name="di Bernardo D."/>
            <person name="Down T."/>
            <person name="Engstrom P."/>
            <person name="Fagiolini M."/>
            <person name="Faulkner G."/>
            <person name="Fletcher C.F."/>
            <person name="Fukushima T."/>
            <person name="Furuno M."/>
            <person name="Futaki S."/>
            <person name="Gariboldi M."/>
            <person name="Georgii-Hemming P."/>
            <person name="Gingeras T.R."/>
            <person name="Gojobori T."/>
            <person name="Green R.E."/>
            <person name="Gustincich S."/>
            <person name="Harbers M."/>
            <person name="Hayashi Y."/>
            <person name="Hensch T.K."/>
            <person name="Hirokawa N."/>
            <person name="Hill D."/>
            <person name="Huminiecki L."/>
            <person name="Iacono M."/>
            <person name="Ikeo K."/>
            <person name="Iwama A."/>
            <person name="Ishikawa T."/>
            <person name="Jakt M."/>
            <person name="Kanapin A."/>
            <person name="Katoh M."/>
            <person name="Kawasawa Y."/>
            <person name="Kelso J."/>
            <person name="Kitamura H."/>
            <person name="Kitano H."/>
            <person name="Kollias G."/>
            <person name="Krishnan S.P."/>
            <person name="Kruger A."/>
            <person name="Kummerfeld S.K."/>
            <person name="Kurochkin I.V."/>
            <person name="Lareau L.F."/>
            <person name="Lazarevic D."/>
            <person name="Lipovich L."/>
            <person name="Liu J."/>
            <person name="Liuni S."/>
            <person name="McWilliam S."/>
            <person name="Madan Babu M."/>
            <person name="Madera M."/>
            <person name="Marchionni L."/>
            <person name="Matsuda H."/>
            <person name="Matsuzawa S."/>
            <person name="Miki H."/>
            <person name="Mignone F."/>
            <person name="Miyake S."/>
            <person name="Morris K."/>
            <person name="Mottagui-Tabar S."/>
            <person name="Mulder N."/>
            <person name="Nakano N."/>
            <person name="Nakauchi H."/>
            <person name="Ng P."/>
            <person name="Nilsson R."/>
            <person name="Nishiguchi S."/>
            <person name="Nishikawa S."/>
            <person name="Nori F."/>
            <person name="Ohara O."/>
            <person name="Okazaki Y."/>
            <person name="Orlando V."/>
            <person name="Pang K.C."/>
            <person name="Pavan W.J."/>
            <person name="Pavesi G."/>
            <person name="Pesole G."/>
            <person name="Petrovsky N."/>
            <person name="Piazza S."/>
            <person name="Reed J."/>
            <person name="Reid J.F."/>
            <person name="Ring B.Z."/>
            <person name="Ringwald M."/>
            <person name="Rost B."/>
            <person name="Ruan Y."/>
            <person name="Salzberg S.L."/>
            <person name="Sandelin A."/>
            <person name="Schneider C."/>
            <person name="Schoenbach C."/>
            <person name="Sekiguchi K."/>
            <person name="Semple C.A."/>
            <person name="Seno S."/>
            <person name="Sessa L."/>
            <person name="Sheng Y."/>
            <person name="Shibata Y."/>
            <person name="Shimada H."/>
            <person name="Shimada K."/>
            <person name="Silva D."/>
            <person name="Sinclair B."/>
            <person name="Sperling S."/>
            <person name="Stupka E."/>
            <person name="Sugiura K."/>
            <person name="Sultana R."/>
            <person name="Takenaka Y."/>
            <person name="Taki K."/>
            <person name="Tammoja K."/>
            <person name="Tan S.L."/>
            <person name="Tang S."/>
            <person name="Taylor M.S."/>
            <person name="Tegner J."/>
            <person name="Teichmann S.A."/>
            <person name="Ueda H.R."/>
            <person name="van Nimwegen E."/>
            <person name="Verardo R."/>
            <person name="Wei C.L."/>
            <person name="Yagi K."/>
            <person name="Yamanishi H."/>
            <person name="Zabarovsky E."/>
            <person name="Zhu S."/>
            <person name="Zimmer A."/>
            <person name="Hide W."/>
            <person name="Bult C."/>
            <person name="Grimmond S.M."/>
            <person name="Teasdale R.D."/>
            <person name="Liu E.T."/>
            <person name="Brusic V."/>
            <person name="Quackenbush J."/>
            <person name="Wahlestedt C."/>
            <person name="Mattick J.S."/>
            <person name="Hume D.A."/>
            <person name="Kai C."/>
            <person name="Sasaki D."/>
            <person name="Tomaru Y."/>
            <person name="Fukuda S."/>
            <person name="Kanamori-Katayama M."/>
            <person name="Suzuki M."/>
            <person name="Aoki J."/>
            <person name="Arakawa T."/>
            <person name="Iida J."/>
            <person name="Imamura K."/>
            <person name="Itoh M."/>
            <person name="Kato T."/>
            <person name="Kawaji H."/>
            <person name="Kawagashira N."/>
            <person name="Kawashima T."/>
            <person name="Kojima M."/>
            <person name="Kondo S."/>
            <person name="Konno H."/>
            <person name="Nakano K."/>
            <person name="Ninomiya N."/>
            <person name="Nishio T."/>
            <person name="Okada M."/>
            <person name="Plessy C."/>
            <person name="Shibata K."/>
            <person name="Shiraki T."/>
            <person name="Suzuki S."/>
            <person name="Tagami M."/>
            <person name="Waki K."/>
            <person name="Watahiki A."/>
            <person name="Okamura-Oho Y."/>
            <person name="Suzuki H."/>
            <person name="Kawai J."/>
            <person name="Hayashizaki Y."/>
        </authorList>
    </citation>
    <scope>NUCLEOTIDE SEQUENCE [LARGE SCALE MRNA] (ISOFORM 2)</scope>
    <source>
        <strain>C57BL/6J</strain>
        <tissue>Retina</tissue>
    </source>
</reference>
<reference key="3">
    <citation type="journal article" date="2009" name="PLoS Biol.">
        <title>Lineage-specific biology revealed by a finished genome assembly of the mouse.</title>
        <authorList>
            <person name="Church D.M."/>
            <person name="Goodstadt L."/>
            <person name="Hillier L.W."/>
            <person name="Zody M.C."/>
            <person name="Goldstein S."/>
            <person name="She X."/>
            <person name="Bult C.J."/>
            <person name="Agarwala R."/>
            <person name="Cherry J.L."/>
            <person name="DiCuccio M."/>
            <person name="Hlavina W."/>
            <person name="Kapustin Y."/>
            <person name="Meric P."/>
            <person name="Maglott D."/>
            <person name="Birtle Z."/>
            <person name="Marques A.C."/>
            <person name="Graves T."/>
            <person name="Zhou S."/>
            <person name="Teague B."/>
            <person name="Potamousis K."/>
            <person name="Churas C."/>
            <person name="Place M."/>
            <person name="Herschleb J."/>
            <person name="Runnheim R."/>
            <person name="Forrest D."/>
            <person name="Amos-Landgraf J."/>
            <person name="Schwartz D.C."/>
            <person name="Cheng Z."/>
            <person name="Lindblad-Toh K."/>
            <person name="Eichler E.E."/>
            <person name="Ponting C.P."/>
        </authorList>
    </citation>
    <scope>NUCLEOTIDE SEQUENCE [LARGE SCALE GENOMIC DNA]</scope>
    <source>
        <strain>C57BL/6J</strain>
    </source>
</reference>
<reference key="4">
    <citation type="journal article" date="2004" name="Genome Res.">
        <title>The status, quality, and expansion of the NIH full-length cDNA project: the Mammalian Gene Collection (MGC).</title>
        <authorList>
            <consortium name="The MGC Project Team"/>
        </authorList>
    </citation>
    <scope>NUCLEOTIDE SEQUENCE [LARGE SCALE MRNA] (ISOFORM 1)</scope>
    <source>
        <strain>FVB/N</strain>
        <tissue>Salivary gland</tissue>
    </source>
</reference>
<reference key="5">
    <citation type="journal article" date="2007" name="Proc. Natl. Acad. Sci. U.S.A.">
        <title>Large-scale phosphorylation analysis of mouse liver.</title>
        <authorList>
            <person name="Villen J."/>
            <person name="Beausoleil S.A."/>
            <person name="Gerber S.A."/>
            <person name="Gygi S.P."/>
        </authorList>
    </citation>
    <scope>IDENTIFICATION BY MASS SPECTROMETRY [LARGE SCALE ANALYSIS]</scope>
    <source>
        <tissue>Liver</tissue>
    </source>
</reference>
<reference key="6">
    <citation type="journal article" date="2010" name="Cell">
        <title>A tissue-specific atlas of mouse protein phosphorylation and expression.</title>
        <authorList>
            <person name="Huttlin E.L."/>
            <person name="Jedrychowski M.P."/>
            <person name="Elias J.E."/>
            <person name="Goswami T."/>
            <person name="Rad R."/>
            <person name="Beausoleil S.A."/>
            <person name="Villen J."/>
            <person name="Haas W."/>
            <person name="Sowa M.E."/>
            <person name="Gygi S.P."/>
        </authorList>
    </citation>
    <scope>PHOSPHORYLATION [LARGE SCALE ANALYSIS] AT SER-670</scope>
    <scope>IDENTIFICATION BY MASS SPECTROMETRY [LARGE SCALE ANALYSIS]</scope>
    <source>
        <tissue>Brain</tissue>
        <tissue>Brown adipose tissue</tissue>
        <tissue>Liver</tissue>
        <tissue>Lung</tissue>
        <tissue>Pancreas</tissue>
    </source>
</reference>
<dbReference type="EMBL" id="AB087506">
    <property type="protein sequence ID" value="BAC67686.1"/>
    <property type="molecule type" value="mRNA"/>
</dbReference>
<dbReference type="EMBL" id="AK044395">
    <property type="protein sequence ID" value="BAC31902.1"/>
    <property type="molecule type" value="mRNA"/>
</dbReference>
<dbReference type="EMBL" id="AL603828">
    <property type="status" value="NOT_ANNOTATED_CDS"/>
    <property type="molecule type" value="Genomic_DNA"/>
</dbReference>
<dbReference type="EMBL" id="BC024617">
    <property type="protein sequence ID" value="AAH24617.1"/>
    <property type="molecule type" value="mRNA"/>
</dbReference>
<dbReference type="CCDS" id="CCDS25630.1">
    <molecule id="Q8R1F6-1"/>
</dbReference>
<dbReference type="CCDS" id="CCDS83927.1">
    <molecule id="Q8R1F6-2"/>
</dbReference>
<dbReference type="RefSeq" id="NP_001333703.1">
    <molecule id="Q8R1F6-2"/>
    <property type="nucleotide sequence ID" value="NM_001346774.1"/>
</dbReference>
<dbReference type="RefSeq" id="NP_780663.1">
    <molecule id="Q8R1F6-1"/>
    <property type="nucleotide sequence ID" value="NM_175454.2"/>
</dbReference>
<dbReference type="BioGRID" id="229885">
    <property type="interactions" value="3"/>
</dbReference>
<dbReference type="FunCoup" id="Q8R1F6">
    <property type="interactions" value="1143"/>
</dbReference>
<dbReference type="STRING" id="10090.ENSMUSP00000102152"/>
<dbReference type="GlyGen" id="Q8R1F6">
    <property type="glycosylation" value="2 sites, 1 N-linked glycan (1 site)"/>
</dbReference>
<dbReference type="iPTMnet" id="Q8R1F6"/>
<dbReference type="PhosphoSitePlus" id="Q8R1F6"/>
<dbReference type="jPOST" id="Q8R1F6"/>
<dbReference type="PaxDb" id="10090-ENSMUSP00000102152"/>
<dbReference type="ProteomicsDB" id="269791">
    <molecule id="Q8R1F6-1"/>
</dbReference>
<dbReference type="ProteomicsDB" id="269792">
    <molecule id="Q8R1F6-2"/>
</dbReference>
<dbReference type="Antibodypedia" id="19485">
    <property type="antibodies" value="252 antibodies from 23 providers"/>
</dbReference>
<dbReference type="DNASU" id="217310"/>
<dbReference type="Ensembl" id="ENSMUST00000044152.13">
    <molecule id="Q8R1F6-2"/>
    <property type="protein sequence ID" value="ENSMUSP00000043789.7"/>
    <property type="gene ID" value="ENSMUSG00000034586.15"/>
</dbReference>
<dbReference type="Ensembl" id="ENSMUST00000106542.9">
    <molecule id="Q8R1F6-1"/>
    <property type="protein sequence ID" value="ENSMUSP00000102152.3"/>
    <property type="gene ID" value="ENSMUSG00000034586.15"/>
</dbReference>
<dbReference type="GeneID" id="217310"/>
<dbReference type="KEGG" id="mmu:217310"/>
<dbReference type="UCSC" id="uc007mhg.1">
    <molecule id="Q8R1F6-1"/>
    <property type="organism name" value="mouse"/>
</dbReference>
<dbReference type="AGR" id="MGI:2445087"/>
<dbReference type="CTD" id="283987"/>
<dbReference type="MGI" id="MGI:2445087">
    <property type="gene designation" value="Hid1"/>
</dbReference>
<dbReference type="VEuPathDB" id="HostDB:ENSMUSG00000034586"/>
<dbReference type="eggNOG" id="KOG2226">
    <property type="taxonomic scope" value="Eukaryota"/>
</dbReference>
<dbReference type="GeneTree" id="ENSGT00390000003070"/>
<dbReference type="HOGENOM" id="CLU_007392_1_0_1"/>
<dbReference type="InParanoid" id="Q8R1F6"/>
<dbReference type="OMA" id="IFEDDKW"/>
<dbReference type="OrthoDB" id="432953at2759"/>
<dbReference type="PhylomeDB" id="Q8R1F6"/>
<dbReference type="TreeFam" id="TF314291"/>
<dbReference type="BioGRID-ORCS" id="217310">
    <property type="hits" value="5 hits in 76 CRISPR screens"/>
</dbReference>
<dbReference type="ChiTaRS" id="Hid1">
    <property type="organism name" value="mouse"/>
</dbReference>
<dbReference type="PRO" id="PR:Q8R1F6"/>
<dbReference type="Proteomes" id="UP000000589">
    <property type="component" value="Chromosome 11"/>
</dbReference>
<dbReference type="RNAct" id="Q8R1F6">
    <property type="molecule type" value="protein"/>
</dbReference>
<dbReference type="Bgee" id="ENSMUSG00000034586">
    <property type="expression patterns" value="Expressed in lacrimal gland and 167 other cell types or tissues"/>
</dbReference>
<dbReference type="ExpressionAtlas" id="Q8R1F6">
    <property type="expression patterns" value="baseline and differential"/>
</dbReference>
<dbReference type="GO" id="GO:0005737">
    <property type="term" value="C:cytoplasm"/>
    <property type="evidence" value="ECO:0000250"/>
    <property type="project" value="UniProtKB"/>
</dbReference>
<dbReference type="GO" id="GO:0005881">
    <property type="term" value="C:cytoplasmic microtubule"/>
    <property type="evidence" value="ECO:0000250"/>
    <property type="project" value="UniProtKB"/>
</dbReference>
<dbReference type="GO" id="GO:0098548">
    <property type="term" value="C:cytoplasmic side of Golgi membrane"/>
    <property type="evidence" value="ECO:0000250"/>
    <property type="project" value="UniProtKB"/>
</dbReference>
<dbReference type="GO" id="GO:0005829">
    <property type="term" value="C:cytosol"/>
    <property type="evidence" value="ECO:0007669"/>
    <property type="project" value="Ensembl"/>
</dbReference>
<dbReference type="GO" id="GO:0005797">
    <property type="term" value="C:Golgi medial cisterna"/>
    <property type="evidence" value="ECO:0000250"/>
    <property type="project" value="UniProtKB"/>
</dbReference>
<dbReference type="GO" id="GO:0000138">
    <property type="term" value="C:Golgi trans cisterna"/>
    <property type="evidence" value="ECO:0000250"/>
    <property type="project" value="UniProtKB"/>
</dbReference>
<dbReference type="GO" id="GO:0030070">
    <property type="term" value="P:insulin processing"/>
    <property type="evidence" value="ECO:0000315"/>
    <property type="project" value="MGI"/>
</dbReference>
<dbReference type="GO" id="GO:0009749">
    <property type="term" value="P:response to glucose"/>
    <property type="evidence" value="ECO:0000315"/>
    <property type="project" value="MGI"/>
</dbReference>
<dbReference type="GO" id="GO:0061792">
    <property type="term" value="P:secretory granule maturation"/>
    <property type="evidence" value="ECO:0000315"/>
    <property type="project" value="MGI"/>
</dbReference>
<dbReference type="GO" id="GO:0042144">
    <property type="term" value="P:vacuole fusion, non-autophagic"/>
    <property type="evidence" value="ECO:0000315"/>
    <property type="project" value="MGI"/>
</dbReference>
<dbReference type="InterPro" id="IPR026705">
    <property type="entry name" value="Hid-1/Ecm30"/>
</dbReference>
<dbReference type="PANTHER" id="PTHR21575">
    <property type="entry name" value="PROTEIN HID1"/>
    <property type="match status" value="1"/>
</dbReference>
<dbReference type="PANTHER" id="PTHR21575:SF12">
    <property type="entry name" value="PROTEIN HID1"/>
    <property type="match status" value="1"/>
</dbReference>
<dbReference type="Pfam" id="PF12722">
    <property type="entry name" value="Hid1"/>
    <property type="match status" value="1"/>
</dbReference>
<keyword id="KW-0025">Alternative splicing</keyword>
<keyword id="KW-0963">Cytoplasm</keyword>
<keyword id="KW-0333">Golgi apparatus</keyword>
<keyword id="KW-0449">Lipoprotein</keyword>
<keyword id="KW-0472">Membrane</keyword>
<keyword id="KW-0519">Myristate</keyword>
<keyword id="KW-0597">Phosphoprotein</keyword>
<keyword id="KW-1185">Reference proteome</keyword>
<accession>Q8R1F6</accession>
<accession>A2A6S8</accession>
<accession>Q8C8V6</accession>
<gene>
    <name type="primary">Hid1</name>
</gene>
<evidence type="ECO:0000250" key="1"/>
<evidence type="ECO:0000250" key="2">
    <source>
        <dbReference type="UniProtKB" id="Q8IV36"/>
    </source>
</evidence>
<evidence type="ECO:0000256" key="3">
    <source>
        <dbReference type="SAM" id="MobiDB-lite"/>
    </source>
</evidence>
<evidence type="ECO:0000303" key="4">
    <source>
    </source>
</evidence>
<evidence type="ECO:0000305" key="5"/>
<evidence type="ECO:0007744" key="6">
    <source>
    </source>
</evidence>
<organism>
    <name type="scientific">Mus musculus</name>
    <name type="common">Mouse</name>
    <dbReference type="NCBI Taxonomy" id="10090"/>
    <lineage>
        <taxon>Eukaryota</taxon>
        <taxon>Metazoa</taxon>
        <taxon>Chordata</taxon>
        <taxon>Craniata</taxon>
        <taxon>Vertebrata</taxon>
        <taxon>Euteleostomi</taxon>
        <taxon>Mammalia</taxon>
        <taxon>Eutheria</taxon>
        <taxon>Euarchontoglires</taxon>
        <taxon>Glires</taxon>
        <taxon>Rodentia</taxon>
        <taxon>Myomorpha</taxon>
        <taxon>Muroidea</taxon>
        <taxon>Muridae</taxon>
        <taxon>Murinae</taxon>
        <taxon>Mus</taxon>
        <taxon>Mus</taxon>
    </lineage>
</organism>
<feature type="initiator methionine" description="Removed" evidence="2">
    <location>
        <position position="1"/>
    </location>
</feature>
<feature type="chain" id="PRO_0000079297" description="Protein HID1">
    <location>
        <begin position="2"/>
        <end position="788"/>
    </location>
</feature>
<feature type="region of interest" description="Disordered" evidence="3">
    <location>
        <begin position="297"/>
        <end position="316"/>
    </location>
</feature>
<feature type="region of interest" description="Disordered" evidence="3">
    <location>
        <begin position="571"/>
        <end position="680"/>
    </location>
</feature>
<feature type="compositionally biased region" description="Low complexity" evidence="3">
    <location>
        <begin position="297"/>
        <end position="313"/>
    </location>
</feature>
<feature type="compositionally biased region" description="Polar residues" evidence="3">
    <location>
        <begin position="590"/>
        <end position="600"/>
    </location>
</feature>
<feature type="compositionally biased region" description="Polar residues" evidence="3">
    <location>
        <begin position="643"/>
        <end position="680"/>
    </location>
</feature>
<feature type="modified residue" description="Phosphoserine" evidence="2">
    <location>
        <position position="653"/>
    </location>
</feature>
<feature type="modified residue" description="Phosphoserine" evidence="6">
    <location>
        <position position="670"/>
    </location>
</feature>
<feature type="lipid moiety-binding region" description="N-myristoyl glycine" evidence="2">
    <location>
        <position position="2"/>
    </location>
</feature>
<feature type="splice variant" id="VSP_014474" description="In isoform 2." evidence="4">
    <location>
        <position position="130"/>
    </location>
</feature>
<feature type="sequence conflict" description="In Ref. 2; BAC31902." evidence="5" ref="2">
    <original>I</original>
    <variation>F</variation>
    <location>
        <position position="332"/>
    </location>
</feature>
<protein>
    <recommendedName>
        <fullName>Protein HID1</fullName>
    </recommendedName>
    <alternativeName>
        <fullName>HID1 domain-containing protein</fullName>
    </alternativeName>
    <alternativeName>
        <fullName>Protein hid-1 homolog</fullName>
    </alternativeName>
</protein>
<comment type="subcellular location">
    <subcellularLocation>
        <location evidence="1">Cytoplasm</location>
    </subcellularLocation>
    <subcellularLocation>
        <location evidence="1">Golgi apparatus membrane</location>
        <topology evidence="1">Lipid-anchor</topology>
    </subcellularLocation>
    <text evidence="1">Shuttles between the cytosol and the Golgi apparatus.</text>
</comment>
<comment type="alternative products">
    <event type="alternative splicing"/>
    <isoform>
        <id>Q8R1F6-1</id>
        <name>1</name>
        <sequence type="displayed"/>
    </isoform>
    <isoform>
        <id>Q8R1F6-2</id>
        <name>2</name>
        <sequence type="described" ref="VSP_014474"/>
    </isoform>
</comment>
<comment type="similarity">
    <text evidence="5">Belongs to the hid-1 family.</text>
</comment>
<name>HID1_MOUSE</name>